<sequence>MRRQLLPALTMLLVFTVITGIVYPLAVTGVGQLFFGDQANGALLERDGQVIGSAHIGQQFTAAKYFHPRPSSAGDGYDAAASSGSNLGPTNEKLLAAVAERVTAYRKENNLPADTLVPVDAVTGSGSGLDPAISVVNAKLQAPRVAQARNISIRQVERLIEDHTDARGLGFLGERAVNVLRLNLALDRL</sequence>
<comment type="function">
    <text evidence="1">Part of the high-affinity ATP-driven potassium transport (or Kdp) system, which catalyzes the hydrolysis of ATP coupled with the electrogenic transport of potassium into the cytoplasm. This subunit acts as a catalytic chaperone that increases the ATP-binding affinity of the ATP-hydrolyzing subunit KdpB by the formation of a transient KdpB/KdpC/ATP ternary complex.</text>
</comment>
<comment type="subunit">
    <text evidence="1">The system is composed of three essential subunits: KdpA, KdpB and KdpC.</text>
</comment>
<comment type="subcellular location">
    <subcellularLocation>
        <location evidence="1">Cell membrane</location>
        <topology evidence="1">Single-pass membrane protein</topology>
    </subcellularLocation>
</comment>
<comment type="similarity">
    <text evidence="1">Belongs to the KdpC family.</text>
</comment>
<name>KDPC_MYCBP</name>
<accession>A1KHH0</accession>
<gene>
    <name evidence="1" type="primary">kdpC</name>
    <name type="ordered locus">BCG_1089</name>
</gene>
<reference key="1">
    <citation type="journal article" date="2007" name="Proc. Natl. Acad. Sci. U.S.A.">
        <title>Genome plasticity of BCG and impact on vaccine efficacy.</title>
        <authorList>
            <person name="Brosch R."/>
            <person name="Gordon S.V."/>
            <person name="Garnier T."/>
            <person name="Eiglmeier K."/>
            <person name="Frigui W."/>
            <person name="Valenti P."/>
            <person name="Dos Santos S."/>
            <person name="Duthoy S."/>
            <person name="Lacroix C."/>
            <person name="Garcia-Pelayo C."/>
            <person name="Inwald J.K."/>
            <person name="Golby P."/>
            <person name="Garcia J.N."/>
            <person name="Hewinson R.G."/>
            <person name="Behr M.A."/>
            <person name="Quail M.A."/>
            <person name="Churcher C."/>
            <person name="Barrell B.G."/>
            <person name="Parkhill J."/>
            <person name="Cole S.T."/>
        </authorList>
    </citation>
    <scope>NUCLEOTIDE SEQUENCE [LARGE SCALE GENOMIC DNA]</scope>
    <source>
        <strain>BCG / Pasteur 1173P2</strain>
    </source>
</reference>
<dbReference type="EMBL" id="AM408590">
    <property type="protein sequence ID" value="CAL71076.1"/>
    <property type="molecule type" value="Genomic_DNA"/>
</dbReference>
<dbReference type="RefSeq" id="WP_003405322.1">
    <property type="nucleotide sequence ID" value="NC_008769.1"/>
</dbReference>
<dbReference type="SMR" id="A1KHH0"/>
<dbReference type="KEGG" id="mbb:BCG_1089"/>
<dbReference type="HOGENOM" id="CLU_077094_2_0_11"/>
<dbReference type="Proteomes" id="UP000001472">
    <property type="component" value="Chromosome"/>
</dbReference>
<dbReference type="GO" id="GO:0005886">
    <property type="term" value="C:plasma membrane"/>
    <property type="evidence" value="ECO:0007669"/>
    <property type="project" value="UniProtKB-SubCell"/>
</dbReference>
<dbReference type="GO" id="GO:0005524">
    <property type="term" value="F:ATP binding"/>
    <property type="evidence" value="ECO:0007669"/>
    <property type="project" value="UniProtKB-UniRule"/>
</dbReference>
<dbReference type="GO" id="GO:0008556">
    <property type="term" value="F:P-type potassium transmembrane transporter activity"/>
    <property type="evidence" value="ECO:0007669"/>
    <property type="project" value="InterPro"/>
</dbReference>
<dbReference type="HAMAP" id="MF_00276">
    <property type="entry name" value="KdpC"/>
    <property type="match status" value="1"/>
</dbReference>
<dbReference type="InterPro" id="IPR003820">
    <property type="entry name" value="KdpC"/>
</dbReference>
<dbReference type="NCBIfam" id="TIGR00681">
    <property type="entry name" value="kdpC"/>
    <property type="match status" value="1"/>
</dbReference>
<dbReference type="NCBIfam" id="NF001454">
    <property type="entry name" value="PRK00315.1"/>
    <property type="match status" value="1"/>
</dbReference>
<dbReference type="NCBIfam" id="NF010605">
    <property type="entry name" value="PRK14001.1"/>
    <property type="match status" value="1"/>
</dbReference>
<dbReference type="PANTHER" id="PTHR30042">
    <property type="entry name" value="POTASSIUM-TRANSPORTING ATPASE C CHAIN"/>
    <property type="match status" value="1"/>
</dbReference>
<dbReference type="PANTHER" id="PTHR30042:SF2">
    <property type="entry name" value="POTASSIUM-TRANSPORTING ATPASE KDPC SUBUNIT"/>
    <property type="match status" value="1"/>
</dbReference>
<dbReference type="Pfam" id="PF02669">
    <property type="entry name" value="KdpC"/>
    <property type="match status" value="1"/>
</dbReference>
<dbReference type="PIRSF" id="PIRSF001296">
    <property type="entry name" value="K_ATPase_KdpC"/>
    <property type="match status" value="1"/>
</dbReference>
<protein>
    <recommendedName>
        <fullName evidence="1">Potassium-transporting ATPase KdpC subunit</fullName>
    </recommendedName>
    <alternativeName>
        <fullName evidence="1">ATP phosphohydrolase [potassium-transporting] C chain</fullName>
    </alternativeName>
    <alternativeName>
        <fullName evidence="1">Potassium-binding and translocating subunit C</fullName>
    </alternativeName>
    <alternativeName>
        <fullName evidence="1">Potassium-translocating ATPase C chain</fullName>
    </alternativeName>
</protein>
<proteinExistence type="inferred from homology"/>
<evidence type="ECO:0000255" key="1">
    <source>
        <dbReference type="HAMAP-Rule" id="MF_00276"/>
    </source>
</evidence>
<feature type="chain" id="PRO_1000022295" description="Potassium-transporting ATPase KdpC subunit">
    <location>
        <begin position="1"/>
        <end position="189"/>
    </location>
</feature>
<feature type="transmembrane region" description="Helical" evidence="1">
    <location>
        <begin position="5"/>
        <end position="25"/>
    </location>
</feature>
<keyword id="KW-0067">ATP-binding</keyword>
<keyword id="KW-1003">Cell membrane</keyword>
<keyword id="KW-0406">Ion transport</keyword>
<keyword id="KW-0472">Membrane</keyword>
<keyword id="KW-0547">Nucleotide-binding</keyword>
<keyword id="KW-0630">Potassium</keyword>
<keyword id="KW-0633">Potassium transport</keyword>
<keyword id="KW-0812">Transmembrane</keyword>
<keyword id="KW-1133">Transmembrane helix</keyword>
<keyword id="KW-0813">Transport</keyword>
<organism>
    <name type="scientific">Mycobacterium bovis (strain BCG / Pasteur 1173P2)</name>
    <dbReference type="NCBI Taxonomy" id="410289"/>
    <lineage>
        <taxon>Bacteria</taxon>
        <taxon>Bacillati</taxon>
        <taxon>Actinomycetota</taxon>
        <taxon>Actinomycetes</taxon>
        <taxon>Mycobacteriales</taxon>
        <taxon>Mycobacteriaceae</taxon>
        <taxon>Mycobacterium</taxon>
        <taxon>Mycobacterium tuberculosis complex</taxon>
    </lineage>
</organism>